<comment type="tissue specificity">
    <text evidence="1">Nacreous layer of shell.</text>
</comment>
<keyword id="KW-0903">Direct protein sequencing</keyword>
<sequence length="10" mass="960">TLASAIASAR</sequence>
<organism>
    <name type="scientific">Nautilus macromphalus</name>
    <name type="common">Bellybutton nautilus</name>
    <dbReference type="NCBI Taxonomy" id="34576"/>
    <lineage>
        <taxon>Eukaryota</taxon>
        <taxon>Metazoa</taxon>
        <taxon>Spiralia</taxon>
        <taxon>Lophotrochozoa</taxon>
        <taxon>Mollusca</taxon>
        <taxon>Cephalopoda</taxon>
        <taxon>Nautiloidea</taxon>
        <taxon>Nautilida</taxon>
        <taxon>Nautilidae</taxon>
        <taxon>Nautilus</taxon>
    </lineage>
</organism>
<reference key="1">
    <citation type="journal article" date="2009" name="ChemBioChem">
        <title>Evolution of nacre: biochemistry and 'shellomics' of the shell organic matrix of the cephalopod Nautilus macromphalus.</title>
        <authorList>
            <person name="Marie B."/>
            <person name="Marin F."/>
            <person name="Marie A."/>
            <person name="Bedouet L."/>
            <person name="Dubost L."/>
            <person name="Alcaraz G."/>
            <person name="Milet C."/>
            <person name="Luquet G."/>
        </authorList>
    </citation>
    <scope>PROTEIN SEQUENCE</scope>
    <scope>TISSUE SPECIFICITY</scope>
    <source>
        <tissue>Shell</tissue>
    </source>
</reference>
<feature type="chain" id="PRO_0000371465" description="Uncharacterized protein IMPP4">
    <location>
        <begin position="1" status="less than"/>
        <end position="10" status="greater than"/>
    </location>
</feature>
<feature type="unsure residue" description="L or I" evidence="1">
    <location>
        <position position="2"/>
    </location>
</feature>
<feature type="unsure residue" description="I or L" evidence="1">
    <location>
        <position position="6"/>
    </location>
</feature>
<feature type="non-terminal residue" evidence="2">
    <location>
        <position position="1"/>
    </location>
</feature>
<feature type="non-terminal residue" evidence="2">
    <location>
        <position position="10"/>
    </location>
</feature>
<proteinExistence type="evidence at protein level"/>
<protein>
    <recommendedName>
        <fullName evidence="2">Uncharacterized protein IMPP4</fullName>
    </recommendedName>
</protein>
<evidence type="ECO:0000269" key="1">
    <source>
    </source>
</evidence>
<evidence type="ECO:0000303" key="2">
    <source>
    </source>
</evidence>
<accession>P85385</accession>
<name>IMP04_NAUMA</name>